<feature type="chain" id="PRO_0000090928" description="Elongation factor 1-alpha">
    <location>
        <begin position="1"/>
        <end position="443"/>
    </location>
</feature>
<feature type="domain" description="tr-type G">
    <location>
        <begin position="5"/>
        <end position="228"/>
    </location>
</feature>
<feature type="region of interest" description="G1" evidence="1">
    <location>
        <begin position="14"/>
        <end position="21"/>
    </location>
</feature>
<feature type="region of interest" description="G2" evidence="1">
    <location>
        <begin position="70"/>
        <end position="74"/>
    </location>
</feature>
<feature type="region of interest" description="G3" evidence="1">
    <location>
        <begin position="91"/>
        <end position="94"/>
    </location>
</feature>
<feature type="region of interest" description="G4" evidence="1">
    <location>
        <begin position="153"/>
        <end position="156"/>
    </location>
</feature>
<feature type="region of interest" description="G5" evidence="1">
    <location>
        <begin position="192"/>
        <end position="194"/>
    </location>
</feature>
<feature type="binding site" evidence="1">
    <location>
        <begin position="14"/>
        <end position="21"/>
    </location>
    <ligand>
        <name>GTP</name>
        <dbReference type="ChEBI" id="CHEBI:37565"/>
    </ligand>
</feature>
<feature type="binding site" evidence="1">
    <location>
        <begin position="91"/>
        <end position="95"/>
    </location>
    <ligand>
        <name>GTP</name>
        <dbReference type="ChEBI" id="CHEBI:37565"/>
    </ligand>
</feature>
<feature type="binding site" evidence="1">
    <location>
        <begin position="153"/>
        <end position="156"/>
    </location>
    <ligand>
        <name>GTP</name>
        <dbReference type="ChEBI" id="CHEBI:37565"/>
    </ligand>
</feature>
<gene>
    <name type="primary">MEF-1</name>
</gene>
<organism>
    <name type="scientific">Plasmodium falciparum (isolate K1 / Thailand)</name>
    <dbReference type="NCBI Taxonomy" id="5839"/>
    <lineage>
        <taxon>Eukaryota</taxon>
        <taxon>Sar</taxon>
        <taxon>Alveolata</taxon>
        <taxon>Apicomplexa</taxon>
        <taxon>Aconoidasida</taxon>
        <taxon>Haemosporida</taxon>
        <taxon>Plasmodiidae</taxon>
        <taxon>Plasmodium</taxon>
        <taxon>Plasmodium (Laverania)</taxon>
    </lineage>
</organism>
<reference key="1">
    <citation type="submission" date="1991-08" db="EMBL/GenBank/DDBJ databases">
        <title>Isolation of a gene coding ef1-alpha from the human malaria parasite, P.falciparum.</title>
        <authorList>
            <person name="Ross-Macdonald P.B."/>
            <person name="Williamson D.H."/>
        </authorList>
    </citation>
    <scope>NUCLEOTIDE SEQUENCE [GENOMIC DNA]</scope>
</reference>
<comment type="function">
    <text>This protein promotes the GTP-dependent binding of aminoacyl-tRNA to the A-site of ribosomes during protein biosynthesis.</text>
</comment>
<comment type="subcellular location">
    <subcellularLocation>
        <location>Cytoplasm</location>
    </subcellularLocation>
</comment>
<comment type="similarity">
    <text evidence="2">Belongs to the TRAFAC class translation factor GTPase superfamily. Classic translation factor GTPase family. EF-Tu/EF-1A subfamily.</text>
</comment>
<name>EF1A_PLAFK</name>
<accession>Q00080</accession>
<keyword id="KW-0963">Cytoplasm</keyword>
<keyword id="KW-0251">Elongation factor</keyword>
<keyword id="KW-0342">GTP-binding</keyword>
<keyword id="KW-0547">Nucleotide-binding</keyword>
<keyword id="KW-0648">Protein biosynthesis</keyword>
<evidence type="ECO:0000250" key="1"/>
<evidence type="ECO:0000305" key="2"/>
<protein>
    <recommendedName>
        <fullName>Elongation factor 1-alpha</fullName>
        <shortName>EF-1-alpha</shortName>
    </recommendedName>
</protein>
<dbReference type="EMBL" id="X60488">
    <property type="protein sequence ID" value="CAA43018.1"/>
    <property type="molecule type" value="Genomic_DNA"/>
</dbReference>
<dbReference type="PIR" id="S21909">
    <property type="entry name" value="S21909"/>
</dbReference>
<dbReference type="SMR" id="Q00080"/>
<dbReference type="DrugBank" id="DB11638">
    <property type="generic name" value="Artenimol"/>
</dbReference>
<dbReference type="DrugBank" id="DB04315">
    <property type="generic name" value="Guanosine-5'-Diphosphate"/>
</dbReference>
<dbReference type="GO" id="GO:0005737">
    <property type="term" value="C:cytoplasm"/>
    <property type="evidence" value="ECO:0007669"/>
    <property type="project" value="UniProtKB-SubCell"/>
</dbReference>
<dbReference type="GO" id="GO:0005525">
    <property type="term" value="F:GTP binding"/>
    <property type="evidence" value="ECO:0007669"/>
    <property type="project" value="UniProtKB-KW"/>
</dbReference>
<dbReference type="GO" id="GO:0003924">
    <property type="term" value="F:GTPase activity"/>
    <property type="evidence" value="ECO:0007669"/>
    <property type="project" value="InterPro"/>
</dbReference>
<dbReference type="GO" id="GO:0003746">
    <property type="term" value="F:translation elongation factor activity"/>
    <property type="evidence" value="ECO:0007669"/>
    <property type="project" value="UniProtKB-KW"/>
</dbReference>
<dbReference type="CDD" id="cd01883">
    <property type="entry name" value="EF1_alpha"/>
    <property type="match status" value="1"/>
</dbReference>
<dbReference type="CDD" id="cd03693">
    <property type="entry name" value="EF1_alpha_II"/>
    <property type="match status" value="1"/>
</dbReference>
<dbReference type="CDD" id="cd03705">
    <property type="entry name" value="EF1_alpha_III"/>
    <property type="match status" value="1"/>
</dbReference>
<dbReference type="FunFam" id="2.40.30.10:FF:000003">
    <property type="entry name" value="Elongation factor 1-alpha"/>
    <property type="match status" value="1"/>
</dbReference>
<dbReference type="FunFam" id="2.40.30.10:FF:000005">
    <property type="entry name" value="Elongation factor 1-alpha"/>
    <property type="match status" value="1"/>
</dbReference>
<dbReference type="FunFam" id="3.40.50.300:FF:001191">
    <property type="entry name" value="Elongation factor 1-alpha"/>
    <property type="match status" value="1"/>
</dbReference>
<dbReference type="Gene3D" id="3.40.50.300">
    <property type="entry name" value="P-loop containing nucleotide triphosphate hydrolases"/>
    <property type="match status" value="1"/>
</dbReference>
<dbReference type="Gene3D" id="2.40.30.10">
    <property type="entry name" value="Translation factors"/>
    <property type="match status" value="2"/>
</dbReference>
<dbReference type="HAMAP" id="MF_00118_A">
    <property type="entry name" value="EF_Tu_A"/>
    <property type="match status" value="1"/>
</dbReference>
<dbReference type="InterPro" id="IPR004161">
    <property type="entry name" value="EFTu-like_2"/>
</dbReference>
<dbReference type="InterPro" id="IPR031157">
    <property type="entry name" value="G_TR_CS"/>
</dbReference>
<dbReference type="InterPro" id="IPR054696">
    <property type="entry name" value="GTP-eEF1A_C"/>
</dbReference>
<dbReference type="InterPro" id="IPR027417">
    <property type="entry name" value="P-loop_NTPase"/>
</dbReference>
<dbReference type="InterPro" id="IPR000795">
    <property type="entry name" value="T_Tr_GTP-bd_dom"/>
</dbReference>
<dbReference type="InterPro" id="IPR050100">
    <property type="entry name" value="TRAFAC_GTPase_members"/>
</dbReference>
<dbReference type="InterPro" id="IPR009000">
    <property type="entry name" value="Transl_B-barrel_sf"/>
</dbReference>
<dbReference type="InterPro" id="IPR009001">
    <property type="entry name" value="Transl_elong_EF1A/Init_IF2_C"/>
</dbReference>
<dbReference type="InterPro" id="IPR004539">
    <property type="entry name" value="Transl_elong_EF1A_euk/arc"/>
</dbReference>
<dbReference type="NCBIfam" id="TIGR00483">
    <property type="entry name" value="EF-1_alpha"/>
    <property type="match status" value="1"/>
</dbReference>
<dbReference type="NCBIfam" id="NF008969">
    <property type="entry name" value="PRK12317.1"/>
    <property type="match status" value="1"/>
</dbReference>
<dbReference type="PANTHER" id="PTHR23115">
    <property type="entry name" value="TRANSLATION FACTOR"/>
    <property type="match status" value="1"/>
</dbReference>
<dbReference type="Pfam" id="PF22594">
    <property type="entry name" value="GTP-eEF1A_C"/>
    <property type="match status" value="1"/>
</dbReference>
<dbReference type="Pfam" id="PF00009">
    <property type="entry name" value="GTP_EFTU"/>
    <property type="match status" value="1"/>
</dbReference>
<dbReference type="Pfam" id="PF03144">
    <property type="entry name" value="GTP_EFTU_D2"/>
    <property type="match status" value="1"/>
</dbReference>
<dbReference type="PRINTS" id="PR00315">
    <property type="entry name" value="ELONGATNFCT"/>
</dbReference>
<dbReference type="SUPFAM" id="SSF50465">
    <property type="entry name" value="EF-Tu/eEF-1alpha/eIF2-gamma C-terminal domain"/>
    <property type="match status" value="1"/>
</dbReference>
<dbReference type="SUPFAM" id="SSF52540">
    <property type="entry name" value="P-loop containing nucleoside triphosphate hydrolases"/>
    <property type="match status" value="1"/>
</dbReference>
<dbReference type="SUPFAM" id="SSF50447">
    <property type="entry name" value="Translation proteins"/>
    <property type="match status" value="1"/>
</dbReference>
<dbReference type="PROSITE" id="PS00301">
    <property type="entry name" value="G_TR_1"/>
    <property type="match status" value="1"/>
</dbReference>
<dbReference type="PROSITE" id="PS51722">
    <property type="entry name" value="G_TR_2"/>
    <property type="match status" value="1"/>
</dbReference>
<sequence>MGKEKTHINLVVIGHVDSGKSTTTGHIIYKLGGIDRRTIEKFEKESAEMGKGSFKYAWVLDKLKAERERGITIDIALWKFETPRYFFTVIDAPGHKDFIKNMITGTSQADVALLVVPADVGGFDGAFSKEGQTKEHVLLAFTLGVKQIVVGVNKMDTVKYSEDRYEEIKKEVKDYLKKVGYQADKVDFIPISGFEGDNLIEKSDKTPWYKGRTLIEALDTMQPPKRPYDKPLRIPLQGVYKIGGIGTVPVGRVETGILKAGMVLNFAPSAVVSECKSVEMHKEVLEEARPGDNIGFNVKNVSVKEIKRGYVASDTKNEPAKGCSKFTAQVIILNHPGEIKNGYTPLLDCHTSHISCKFLNIDSKIDKRSGKVVEENPKAIKSGDSALVSLEPKKPMVVETFTEYPPLGRFAIRDMRQTIAVGIINQLKRKNLGAVTAKAPAKK</sequence>
<proteinExistence type="inferred from homology"/>